<keyword id="KW-0150">Chloroplast</keyword>
<keyword id="KW-0507">mRNA processing</keyword>
<keyword id="KW-0934">Plastid</keyword>
<keyword id="KW-0694">RNA-binding</keyword>
<keyword id="KW-0819">tRNA processing</keyword>
<accession>Q7YN83</accession>
<proteinExistence type="inferred from homology"/>
<name>MATK_DIOVR</name>
<geneLocation type="chloroplast"/>
<evidence type="ECO:0000255" key="1">
    <source>
        <dbReference type="HAMAP-Rule" id="MF_01390"/>
    </source>
</evidence>
<dbReference type="EMBL" id="AY145446">
    <property type="protein sequence ID" value="AAN62629.1"/>
    <property type="molecule type" value="Genomic_DNA"/>
</dbReference>
<dbReference type="GO" id="GO:0009507">
    <property type="term" value="C:chloroplast"/>
    <property type="evidence" value="ECO:0007669"/>
    <property type="project" value="UniProtKB-SubCell"/>
</dbReference>
<dbReference type="GO" id="GO:0003723">
    <property type="term" value="F:RNA binding"/>
    <property type="evidence" value="ECO:0007669"/>
    <property type="project" value="UniProtKB-KW"/>
</dbReference>
<dbReference type="GO" id="GO:0006397">
    <property type="term" value="P:mRNA processing"/>
    <property type="evidence" value="ECO:0007669"/>
    <property type="project" value="UniProtKB-KW"/>
</dbReference>
<dbReference type="GO" id="GO:0008380">
    <property type="term" value="P:RNA splicing"/>
    <property type="evidence" value="ECO:0007669"/>
    <property type="project" value="UniProtKB-UniRule"/>
</dbReference>
<dbReference type="GO" id="GO:0008033">
    <property type="term" value="P:tRNA processing"/>
    <property type="evidence" value="ECO:0007669"/>
    <property type="project" value="UniProtKB-KW"/>
</dbReference>
<dbReference type="HAMAP" id="MF_01390">
    <property type="entry name" value="MatK"/>
    <property type="match status" value="1"/>
</dbReference>
<dbReference type="InterPro" id="IPR024937">
    <property type="entry name" value="Domain_X"/>
</dbReference>
<dbReference type="InterPro" id="IPR002866">
    <property type="entry name" value="Maturase_MatK"/>
</dbReference>
<dbReference type="InterPro" id="IPR024942">
    <property type="entry name" value="Maturase_MatK_N"/>
</dbReference>
<dbReference type="PANTHER" id="PTHR34811">
    <property type="entry name" value="MATURASE K"/>
    <property type="match status" value="1"/>
</dbReference>
<dbReference type="PANTHER" id="PTHR34811:SF1">
    <property type="entry name" value="MATURASE K"/>
    <property type="match status" value="1"/>
</dbReference>
<dbReference type="Pfam" id="PF01348">
    <property type="entry name" value="Intron_maturas2"/>
    <property type="match status" value="1"/>
</dbReference>
<dbReference type="Pfam" id="PF01824">
    <property type="entry name" value="MatK_N"/>
    <property type="match status" value="1"/>
</dbReference>
<organism>
    <name type="scientific">Diospyros virginiana</name>
    <name type="common">American persimmon</name>
    <name type="synonym">Diospyros mosieri</name>
    <dbReference type="NCBI Taxonomy" id="13493"/>
    <lineage>
        <taxon>Eukaryota</taxon>
        <taxon>Viridiplantae</taxon>
        <taxon>Streptophyta</taxon>
        <taxon>Embryophyta</taxon>
        <taxon>Tracheophyta</taxon>
        <taxon>Spermatophyta</taxon>
        <taxon>Magnoliopsida</taxon>
        <taxon>eudicotyledons</taxon>
        <taxon>Gunneridae</taxon>
        <taxon>Pentapetalae</taxon>
        <taxon>asterids</taxon>
        <taxon>Ericales</taxon>
        <taxon>Ebenaceae</taxon>
        <taxon>Diospyros</taxon>
    </lineage>
</organism>
<protein>
    <recommendedName>
        <fullName evidence="1">Maturase K</fullName>
    </recommendedName>
    <alternativeName>
        <fullName evidence="1">Intron maturase</fullName>
    </alternativeName>
</protein>
<reference key="1">
    <citation type="journal article" date="2002" name="Bot. Rev.">
        <title>A phylogenetic classification of Ericaceae: molecular and morphological evidence.</title>
        <authorList>
            <person name="Kron K.A."/>
            <person name="Judd W.S."/>
            <person name="Stevens P.F."/>
            <person name="Crayn D.M."/>
            <person name="Anderberg A.A."/>
            <person name="Gadek P.A."/>
            <person name="Quinn C.J."/>
            <person name="Luteyn J.L."/>
        </authorList>
    </citation>
    <scope>NUCLEOTIDE SEQUENCE [GENOMIC DNA]</scope>
</reference>
<sequence>MEEFKRYLELDRSQQHDFVYPLIFQEYIYALAHDHGLNRSILLENTGYDNKSSLLIVKRLITQMYQRNHLIFCANDFNQNPFFGHNTNVYSQMVLEGFAVLVEIPFSLRLISSLKGKEIVKSHNLRSIHSIFPFLEDKFSHLNYVLDILIPHSIHLEVLVQTLRYWVKDVSSLHLLRFFLHEYRNWNSLITPKKSSFSFSKRNQRLVLFLYNSHVCEYESIFVFXRXQSSHLRSISSGTFLERIYFYGKIEHFVEVFTKDFKAILWLFKDPFMHYVRYQGKFLLASKGTSLLMNKWKYYLVNFWQCYFYMWSQPGRIHRNHLSNHSLDFLGYLSSVRLNPSIVRSQMLENSFLIGNAIKKYDPIVPIIPLMGSLSKAKFCNVLGHPISKPVWSDLSDSDIIDRFGRIYRNLSHYYSGSSKKMSLYRIKYILRLSCARTLARKHKSTVRAFLKRLGSGLLEEFFTEEEQVFSLTFPKASFTSRGLYRRRIWYLDIICINDLANH</sequence>
<feature type="chain" id="PRO_0000143362" description="Maturase K">
    <location>
        <begin position="1"/>
        <end position="503"/>
    </location>
</feature>
<gene>
    <name evidence="1" type="primary">matK</name>
</gene>
<comment type="function">
    <text evidence="1">Usually encoded in the trnK tRNA gene intron. Probably assists in splicing its own and other chloroplast group II introns.</text>
</comment>
<comment type="subcellular location">
    <subcellularLocation>
        <location>Plastid</location>
        <location>Chloroplast</location>
    </subcellularLocation>
</comment>
<comment type="similarity">
    <text evidence="1">Belongs to the intron maturase 2 family. MatK subfamily.</text>
</comment>